<feature type="chain" id="PRO_1000132657" description="Flagellar hook-basal body complex protein FliE">
    <location>
        <begin position="1"/>
        <end position="104"/>
    </location>
</feature>
<dbReference type="EMBL" id="CP000948">
    <property type="protein sequence ID" value="ACB03123.1"/>
    <property type="molecule type" value="Genomic_DNA"/>
</dbReference>
<dbReference type="RefSeq" id="WP_001274299.1">
    <property type="nucleotide sequence ID" value="NC_010473.1"/>
</dbReference>
<dbReference type="SMR" id="B1X691"/>
<dbReference type="DNASU" id="6059128"/>
<dbReference type="GeneID" id="93775248"/>
<dbReference type="KEGG" id="ecd:ECDH10B_2079"/>
<dbReference type="HOGENOM" id="CLU_147249_0_2_6"/>
<dbReference type="GO" id="GO:0009425">
    <property type="term" value="C:bacterial-type flagellum basal body"/>
    <property type="evidence" value="ECO:0007669"/>
    <property type="project" value="UniProtKB-SubCell"/>
</dbReference>
<dbReference type="GO" id="GO:0003774">
    <property type="term" value="F:cytoskeletal motor activity"/>
    <property type="evidence" value="ECO:0007669"/>
    <property type="project" value="InterPro"/>
</dbReference>
<dbReference type="GO" id="GO:0005198">
    <property type="term" value="F:structural molecule activity"/>
    <property type="evidence" value="ECO:0007669"/>
    <property type="project" value="InterPro"/>
</dbReference>
<dbReference type="GO" id="GO:0071973">
    <property type="term" value="P:bacterial-type flagellum-dependent cell motility"/>
    <property type="evidence" value="ECO:0007669"/>
    <property type="project" value="InterPro"/>
</dbReference>
<dbReference type="HAMAP" id="MF_00724">
    <property type="entry name" value="FliE"/>
    <property type="match status" value="1"/>
</dbReference>
<dbReference type="InterPro" id="IPR001624">
    <property type="entry name" value="FliE"/>
</dbReference>
<dbReference type="NCBIfam" id="TIGR00205">
    <property type="entry name" value="fliE"/>
    <property type="match status" value="1"/>
</dbReference>
<dbReference type="PANTHER" id="PTHR34653">
    <property type="match status" value="1"/>
</dbReference>
<dbReference type="PANTHER" id="PTHR34653:SF1">
    <property type="entry name" value="FLAGELLAR HOOK-BASAL BODY COMPLEX PROTEIN FLIE"/>
    <property type="match status" value="1"/>
</dbReference>
<dbReference type="Pfam" id="PF02049">
    <property type="entry name" value="FliE"/>
    <property type="match status" value="1"/>
</dbReference>
<dbReference type="PRINTS" id="PR01006">
    <property type="entry name" value="FLGHOOKFLIE"/>
</dbReference>
<evidence type="ECO:0000255" key="1">
    <source>
        <dbReference type="HAMAP-Rule" id="MF_00724"/>
    </source>
</evidence>
<comment type="subcellular location">
    <subcellularLocation>
        <location evidence="1">Bacterial flagellum basal body</location>
    </subcellularLocation>
</comment>
<comment type="similarity">
    <text evidence="1">Belongs to the FliE family.</text>
</comment>
<gene>
    <name evidence="1" type="primary">fliE</name>
    <name type="ordered locus">ECDH10B_2079</name>
</gene>
<sequence length="104" mass="11127">MSAIQGIEGVISQLQATAMSARAQESLPQPTISFAGQLHAALDRISDTQTAARTQAEKFTLGEPGVALNDVMTDMQKASVSMQMGIQVRNKLVAAYQEVMSMQV</sequence>
<organism>
    <name type="scientific">Escherichia coli (strain K12 / DH10B)</name>
    <dbReference type="NCBI Taxonomy" id="316385"/>
    <lineage>
        <taxon>Bacteria</taxon>
        <taxon>Pseudomonadati</taxon>
        <taxon>Pseudomonadota</taxon>
        <taxon>Gammaproteobacteria</taxon>
        <taxon>Enterobacterales</taxon>
        <taxon>Enterobacteriaceae</taxon>
        <taxon>Escherichia</taxon>
    </lineage>
</organism>
<accession>B1X691</accession>
<name>FLIE_ECODH</name>
<protein>
    <recommendedName>
        <fullName evidence="1">Flagellar hook-basal body complex protein FliE</fullName>
    </recommendedName>
</protein>
<proteinExistence type="inferred from homology"/>
<keyword id="KW-0975">Bacterial flagellum</keyword>
<reference key="1">
    <citation type="journal article" date="2008" name="J. Bacteriol.">
        <title>The complete genome sequence of Escherichia coli DH10B: insights into the biology of a laboratory workhorse.</title>
        <authorList>
            <person name="Durfee T."/>
            <person name="Nelson R."/>
            <person name="Baldwin S."/>
            <person name="Plunkett G. III"/>
            <person name="Burland V."/>
            <person name="Mau B."/>
            <person name="Petrosino J.F."/>
            <person name="Qin X."/>
            <person name="Muzny D.M."/>
            <person name="Ayele M."/>
            <person name="Gibbs R.A."/>
            <person name="Csorgo B."/>
            <person name="Posfai G."/>
            <person name="Weinstock G.M."/>
            <person name="Blattner F.R."/>
        </authorList>
    </citation>
    <scope>NUCLEOTIDE SEQUENCE [LARGE SCALE GENOMIC DNA]</scope>
    <source>
        <strain>K12 / DH10B</strain>
    </source>
</reference>